<keyword id="KW-0002">3D-structure</keyword>
<keyword id="KW-1185">Reference proteome</keyword>
<keyword id="KW-0687">Ribonucleoprotein</keyword>
<keyword id="KW-0689">Ribosomal protein</keyword>
<reference key="1">
    <citation type="journal article" date="1992" name="Nucleic Acids Res.">
        <title>Sequence and genomic locus of a Leishmania protein homologous to rat ribosomal protein S8.</title>
        <authorList>
            <person name="Bard E."/>
            <person name="Janeczko R."/>
        </authorList>
    </citation>
    <scope>NUCLEOTIDE SEQUENCE [GENOMIC DNA] (RPS8A AND RPS8B)</scope>
    <source>
        <strain>MHOM/IR/83/Lt252</strain>
    </source>
</reference>
<reference key="2">
    <citation type="journal article" date="2005" name="Science">
        <title>The genome of the kinetoplastid parasite, Leishmania major.</title>
        <authorList>
            <person name="Ivens A.C."/>
            <person name="Peacock C.S."/>
            <person name="Worthey E.A."/>
            <person name="Murphy L."/>
            <person name="Aggarwal G."/>
            <person name="Berriman M."/>
            <person name="Sisk E."/>
            <person name="Rajandream M.A."/>
            <person name="Adlem E."/>
            <person name="Aert R."/>
            <person name="Anupama A."/>
            <person name="Apostolou Z."/>
            <person name="Attipoe P."/>
            <person name="Bason N."/>
            <person name="Bauser C."/>
            <person name="Beck A."/>
            <person name="Beverley S.M."/>
            <person name="Bianchettin G."/>
            <person name="Borzym K."/>
            <person name="Bothe G."/>
            <person name="Bruschi C.V."/>
            <person name="Collins M."/>
            <person name="Cadag E."/>
            <person name="Ciarloni L."/>
            <person name="Clayton C."/>
            <person name="Coulson R.M.R."/>
            <person name="Cronin A."/>
            <person name="Cruz A.K."/>
            <person name="Davies R.M."/>
            <person name="De Gaudenzi J."/>
            <person name="Dobson D.E."/>
            <person name="Duesterhoeft A."/>
            <person name="Fazelina G."/>
            <person name="Fosker N."/>
            <person name="Frasch A.C."/>
            <person name="Fraser A."/>
            <person name="Fuchs M."/>
            <person name="Gabel C."/>
            <person name="Goble A."/>
            <person name="Goffeau A."/>
            <person name="Harris D."/>
            <person name="Hertz-Fowler C."/>
            <person name="Hilbert H."/>
            <person name="Horn D."/>
            <person name="Huang Y."/>
            <person name="Klages S."/>
            <person name="Knights A."/>
            <person name="Kube M."/>
            <person name="Larke N."/>
            <person name="Litvin L."/>
            <person name="Lord A."/>
            <person name="Louie T."/>
            <person name="Marra M."/>
            <person name="Masuy D."/>
            <person name="Matthews K."/>
            <person name="Michaeli S."/>
            <person name="Mottram J.C."/>
            <person name="Mueller-Auer S."/>
            <person name="Munden H."/>
            <person name="Nelson S."/>
            <person name="Norbertczak H."/>
            <person name="Oliver K."/>
            <person name="O'neil S."/>
            <person name="Pentony M."/>
            <person name="Pohl T.M."/>
            <person name="Price C."/>
            <person name="Purnelle B."/>
            <person name="Quail M.A."/>
            <person name="Rabbinowitsch E."/>
            <person name="Reinhardt R."/>
            <person name="Rieger M."/>
            <person name="Rinta J."/>
            <person name="Robben J."/>
            <person name="Robertson L."/>
            <person name="Ruiz J.C."/>
            <person name="Rutter S."/>
            <person name="Saunders D."/>
            <person name="Schaefer M."/>
            <person name="Schein J."/>
            <person name="Schwartz D.C."/>
            <person name="Seeger K."/>
            <person name="Seyler A."/>
            <person name="Sharp S."/>
            <person name="Shin H."/>
            <person name="Sivam D."/>
            <person name="Squares R."/>
            <person name="Squares S."/>
            <person name="Tosato V."/>
            <person name="Vogt C."/>
            <person name="Volckaert G."/>
            <person name="Wambutt R."/>
            <person name="Warren T."/>
            <person name="Wedler H."/>
            <person name="Woodward J."/>
            <person name="Zhou S."/>
            <person name="Zimmermann W."/>
            <person name="Smith D.F."/>
            <person name="Blackwell J.M."/>
            <person name="Stuart K.D."/>
            <person name="Barrell B.G."/>
            <person name="Myler P.J."/>
        </authorList>
    </citation>
    <scope>NUCLEOTIDE SEQUENCE [LARGE SCALE GENOMIC DNA] (RPS8A AND RPS8B)</scope>
    <source>
        <strain>MHOM/IL/81/Friedlin</strain>
    </source>
</reference>
<name>RS8_LEIMA</name>
<accession>P25204</accession>
<accession>Q4QAC2</accession>
<proteinExistence type="evidence at protein level"/>
<protein>
    <recommendedName>
        <fullName evidence="1">Small ribosomal subunit protein eS8</fullName>
    </recommendedName>
    <alternativeName>
        <fullName>40S ribosomal protein S8</fullName>
    </alternativeName>
</protein>
<gene>
    <name type="primary">RPS8A</name>
    <name type="synonym">RPS8</name>
    <name type="ORF">LmjF24.2070</name>
    <name type="ORF">LmjF_24_2070</name>
</gene>
<gene>
    <name type="primary">RPS8B</name>
    <name type="synonym">RPS8</name>
    <name type="ORF">LmjF24.2080</name>
    <name type="ORF">LmjF_24_2080</name>
</gene>
<comment type="similarity">
    <text evidence="1">Belongs to the eukaryotic ribosomal protein eS8 family.</text>
</comment>
<dbReference type="EMBL" id="X62942">
    <property type="protein sequence ID" value="CAA44714.1"/>
    <property type="molecule type" value="Genomic_DNA"/>
</dbReference>
<dbReference type="EMBL" id="X62942">
    <property type="protein sequence ID" value="CAA44715.1"/>
    <property type="molecule type" value="Genomic_DNA"/>
</dbReference>
<dbReference type="EMBL" id="FR796420">
    <property type="protein sequence ID" value="CAJ05344.1"/>
    <property type="molecule type" value="Genomic_DNA"/>
</dbReference>
<dbReference type="EMBL" id="FR796420">
    <property type="protein sequence ID" value="CAJ05346.1"/>
    <property type="molecule type" value="Genomic_DNA"/>
</dbReference>
<dbReference type="PIR" id="S20063">
    <property type="entry name" value="S20064"/>
</dbReference>
<dbReference type="RefSeq" id="XP_001683725.1">
    <property type="nucleotide sequence ID" value="XM_001683673.1"/>
</dbReference>
<dbReference type="RefSeq" id="XP_001683726.1">
    <property type="nucleotide sequence ID" value="XM_001683674.1"/>
</dbReference>
<dbReference type="PDB" id="8A3W">
    <property type="method" value="EM"/>
    <property type="resolution" value="2.89 A"/>
    <property type="chains" value="SK=1-220"/>
</dbReference>
<dbReference type="PDB" id="8A98">
    <property type="method" value="EM"/>
    <property type="resolution" value="2.46 A"/>
    <property type="chains" value="SK=1-220"/>
</dbReference>
<dbReference type="PDB" id="8OVJ">
    <property type="method" value="EM"/>
    <property type="resolution" value="2.40 A"/>
    <property type="chains" value="SK=1-220"/>
</dbReference>
<dbReference type="PDB" id="8QHU">
    <property type="method" value="EM"/>
    <property type="resolution" value="2.72 A"/>
    <property type="chains" value="SK=1-220"/>
</dbReference>
<dbReference type="PDB" id="8QIE">
    <property type="method" value="EM"/>
    <property type="resolution" value="2.43 A"/>
    <property type="chains" value="SK=1-220"/>
</dbReference>
<dbReference type="PDB" id="8RXH">
    <property type="method" value="EM"/>
    <property type="resolution" value="2.93 A"/>
    <property type="chains" value="SK=1-220"/>
</dbReference>
<dbReference type="PDB" id="8RXX">
    <property type="method" value="EM"/>
    <property type="resolution" value="2.97 A"/>
    <property type="chains" value="SK=1-220"/>
</dbReference>
<dbReference type="PDBsum" id="8A3W"/>
<dbReference type="PDBsum" id="8A98"/>
<dbReference type="PDBsum" id="8OVJ"/>
<dbReference type="PDBsum" id="8QHU"/>
<dbReference type="PDBsum" id="8QIE"/>
<dbReference type="PDBsum" id="8RXH"/>
<dbReference type="PDBsum" id="8RXX"/>
<dbReference type="EMDB" id="EMD-15124"/>
<dbReference type="EMDB" id="EMD-15272"/>
<dbReference type="EMDB" id="EMD-17216"/>
<dbReference type="EMDB" id="EMD-18419"/>
<dbReference type="EMDB" id="EMD-18437"/>
<dbReference type="EMDB" id="EMD-19576"/>
<dbReference type="EMDB" id="EMD-19582"/>
<dbReference type="SMR" id="P25204"/>
<dbReference type="FunCoup" id="P25204">
    <property type="interactions" value="332"/>
</dbReference>
<dbReference type="STRING" id="5664.P25204"/>
<dbReference type="EnsemblProtists" id="CAJ05344">
    <property type="protein sequence ID" value="CAJ05344"/>
    <property type="gene ID" value="LMJF_24_2070"/>
</dbReference>
<dbReference type="EnsemblProtists" id="CAJ05346">
    <property type="protein sequence ID" value="CAJ05346"/>
    <property type="gene ID" value="LMJF_24_2080"/>
</dbReference>
<dbReference type="GeneID" id="5652381"/>
<dbReference type="GeneID" id="5652382"/>
<dbReference type="KEGG" id="lma:LMJF_24_2070"/>
<dbReference type="KEGG" id="lma:LMJF_24_2080"/>
<dbReference type="VEuPathDB" id="TriTrypDB:LmjF.24.2070"/>
<dbReference type="VEuPathDB" id="TriTrypDB:LMJFC_240030000"/>
<dbReference type="VEuPathDB" id="TriTrypDB:LMJLV39_240028500"/>
<dbReference type="VEuPathDB" id="TriTrypDB:LMJSD75_240027800"/>
<dbReference type="eggNOG" id="KOG3283">
    <property type="taxonomic scope" value="Eukaryota"/>
</dbReference>
<dbReference type="InParanoid" id="P25204"/>
<dbReference type="OMA" id="QRPHYRK"/>
<dbReference type="Proteomes" id="UP000000542">
    <property type="component" value="Chromosome 24"/>
</dbReference>
<dbReference type="GO" id="GO:0005737">
    <property type="term" value="C:cytoplasm"/>
    <property type="evidence" value="ECO:0000266"/>
    <property type="project" value="GeneDB"/>
</dbReference>
<dbReference type="GO" id="GO:0022627">
    <property type="term" value="C:cytosolic small ribosomal subunit"/>
    <property type="evidence" value="ECO:0000318"/>
    <property type="project" value="GO_Central"/>
</dbReference>
<dbReference type="GO" id="GO:0005730">
    <property type="term" value="C:nucleolus"/>
    <property type="evidence" value="ECO:0000266"/>
    <property type="project" value="GeneDB"/>
</dbReference>
<dbReference type="GO" id="GO:0003735">
    <property type="term" value="F:structural constituent of ribosome"/>
    <property type="evidence" value="ECO:0000318"/>
    <property type="project" value="GO_Central"/>
</dbReference>
<dbReference type="GO" id="GO:0000462">
    <property type="term" value="P:maturation of SSU-rRNA from tricistronic rRNA transcript (SSU-rRNA, 5.8S rRNA, LSU-rRNA)"/>
    <property type="evidence" value="ECO:0000318"/>
    <property type="project" value="GO_Central"/>
</dbReference>
<dbReference type="GO" id="GO:0006412">
    <property type="term" value="P:translation"/>
    <property type="evidence" value="ECO:0007669"/>
    <property type="project" value="InterPro"/>
</dbReference>
<dbReference type="CDD" id="cd11380">
    <property type="entry name" value="Ribosomal_S8e_like"/>
    <property type="match status" value="1"/>
</dbReference>
<dbReference type="FunFam" id="3.10.290.70:FF:000008">
    <property type="entry name" value="40S ribosomal protein S8"/>
    <property type="match status" value="1"/>
</dbReference>
<dbReference type="Gene3D" id="3.10.290.70">
    <property type="match status" value="1"/>
</dbReference>
<dbReference type="Gene3D" id="1.10.168.20">
    <property type="entry name" value="Ribosomal protein S8e, subdomain"/>
    <property type="match status" value="1"/>
</dbReference>
<dbReference type="InterPro" id="IPR001047">
    <property type="entry name" value="Ribosomal_eS8"/>
</dbReference>
<dbReference type="InterPro" id="IPR018283">
    <property type="entry name" value="Ribosomal_eS8_CS"/>
</dbReference>
<dbReference type="InterPro" id="IPR042563">
    <property type="entry name" value="Ribosomal_protein_eS8_euk"/>
</dbReference>
<dbReference type="InterPro" id="IPR022309">
    <property type="entry name" value="Ribosomal_Se8/biogenesis_NSA2"/>
</dbReference>
<dbReference type="NCBIfam" id="TIGR00307">
    <property type="entry name" value="eS8"/>
    <property type="match status" value="1"/>
</dbReference>
<dbReference type="PANTHER" id="PTHR10394">
    <property type="entry name" value="40S RIBOSOMAL PROTEIN S8"/>
    <property type="match status" value="1"/>
</dbReference>
<dbReference type="Pfam" id="PF01201">
    <property type="entry name" value="Ribosomal_S8e"/>
    <property type="match status" value="1"/>
</dbReference>
<dbReference type="PROSITE" id="PS01193">
    <property type="entry name" value="RIBOSOMAL_S8E"/>
    <property type="match status" value="1"/>
</dbReference>
<organism>
    <name type="scientific">Leishmania major</name>
    <dbReference type="NCBI Taxonomy" id="5664"/>
    <lineage>
        <taxon>Eukaryota</taxon>
        <taxon>Discoba</taxon>
        <taxon>Euglenozoa</taxon>
        <taxon>Kinetoplastea</taxon>
        <taxon>Metakinetoplastina</taxon>
        <taxon>Trypanosomatida</taxon>
        <taxon>Trypanosomatidae</taxon>
        <taxon>Leishmaniinae</taxon>
        <taxon>Leishmania</taxon>
    </lineage>
</organism>
<evidence type="ECO:0000305" key="1"/>
<feature type="chain" id="PRO_0000122247" description="Small ribosomal subunit protein eS8">
    <location>
        <begin position="1"/>
        <end position="220"/>
    </location>
</feature>
<sequence>MGIVRSRLHKRKITGGKTKIHRKRMKAELGRLPANTRLGARRVSPVRARGGNFKIRALRLDTGNFAWASEAIAHRVRLLDVVYNATSNELVRTKTLVKNCIVAVDAAPFKRWYAKHYGIDLDADKKSTKAAVAAEKKGRKSAHAAADKYDVNKASPKLQREWTRRRRNHRVEKAIADQLREGRVLARITSRPGQSGRADGILLEGAELQFYLKRLEKKKK</sequence>